<accession>B8CNX7</accession>
<comment type="function">
    <text evidence="1">Catalyzes the attachment of L-aspartate to tRNA(Asp) in a two-step reaction: L-aspartate is first activated by ATP to form Asp-AMP and then transferred to the acceptor end of tRNA(Asp).</text>
</comment>
<comment type="catalytic activity">
    <reaction evidence="1">
        <text>tRNA(Asp) + L-aspartate + ATP = L-aspartyl-tRNA(Asp) + AMP + diphosphate</text>
        <dbReference type="Rhea" id="RHEA:19649"/>
        <dbReference type="Rhea" id="RHEA-COMP:9660"/>
        <dbReference type="Rhea" id="RHEA-COMP:9678"/>
        <dbReference type="ChEBI" id="CHEBI:29991"/>
        <dbReference type="ChEBI" id="CHEBI:30616"/>
        <dbReference type="ChEBI" id="CHEBI:33019"/>
        <dbReference type="ChEBI" id="CHEBI:78442"/>
        <dbReference type="ChEBI" id="CHEBI:78516"/>
        <dbReference type="ChEBI" id="CHEBI:456215"/>
        <dbReference type="EC" id="6.1.1.12"/>
    </reaction>
</comment>
<comment type="subunit">
    <text evidence="1">Homodimer.</text>
</comment>
<comment type="subcellular location">
    <subcellularLocation>
        <location evidence="1">Cytoplasm</location>
    </subcellularLocation>
</comment>
<comment type="similarity">
    <text evidence="1">Belongs to the class-II aminoacyl-tRNA synthetase family. Type 1 subfamily.</text>
</comment>
<proteinExistence type="inferred from homology"/>
<sequence>MRSHYCGDVNKSHVGQEVTLVGWVNRSRDLGGVVFLDMRDREGIVQVVYDPDLPEVFEVASSLRSEFCVQIKGLVRARPDSQVNADMRTGEIEILGLELTVLNSSAPLPINMDKNQHNTEEQRLKYRYLDLRRPEMADRIVFRSKVTSAVRRFLDGNGFLDIETPILTKATPEGARDYLVPSRTYKGQFFALPQSPQLFKQLLMMSGFDRYYQIVKCFRDEDLRADRQPEFTQIDIETSFMTSEQVMAKTEEMTRGLFKELLDVDLGEFPRMTFAEAMRRYGSDKPDLRNPLELIDIADLVKEVEFAVFNGPANDPEGRVAVLSIPGGAKLSRKQLDEYAKYVTIYGAKGLAWMKVNDLDKGMEGIQSPVLKFLTEDVVKALLERTGAQTGDVILFGADKANVVAEAMGALRLKAGEDFDLLKGDWKPLWVVDFPMFERTSDGGLHAMHHPFTAPSNMTPAELEANPTAAISDAYDMVLNGCELGGGSVRIHNSEMQSAVFRILGINDEEANEKFGFLLEALRYGTPPHAGLAFGLDRIIMLMTGASSIRDVMAFPKTTTAACPLTNAPGFANPVQLVELGVSVIEPEVKDGE</sequence>
<feature type="chain" id="PRO_1000199010" description="Aspartate--tRNA ligase">
    <location>
        <begin position="1"/>
        <end position="593"/>
    </location>
</feature>
<feature type="region of interest" description="Aspartate" evidence="1">
    <location>
        <begin position="197"/>
        <end position="200"/>
    </location>
</feature>
<feature type="binding site" evidence="1">
    <location>
        <position position="173"/>
    </location>
    <ligand>
        <name>L-aspartate</name>
        <dbReference type="ChEBI" id="CHEBI:29991"/>
    </ligand>
</feature>
<feature type="binding site" evidence="1">
    <location>
        <begin position="219"/>
        <end position="221"/>
    </location>
    <ligand>
        <name>ATP</name>
        <dbReference type="ChEBI" id="CHEBI:30616"/>
    </ligand>
</feature>
<feature type="binding site" evidence="1">
    <location>
        <position position="219"/>
    </location>
    <ligand>
        <name>L-aspartate</name>
        <dbReference type="ChEBI" id="CHEBI:29991"/>
    </ligand>
</feature>
<feature type="binding site" evidence="1">
    <location>
        <position position="228"/>
    </location>
    <ligand>
        <name>ATP</name>
        <dbReference type="ChEBI" id="CHEBI:30616"/>
    </ligand>
</feature>
<feature type="binding site" evidence="1">
    <location>
        <position position="449"/>
    </location>
    <ligand>
        <name>L-aspartate</name>
        <dbReference type="ChEBI" id="CHEBI:29991"/>
    </ligand>
</feature>
<feature type="binding site" evidence="1">
    <location>
        <position position="483"/>
    </location>
    <ligand>
        <name>ATP</name>
        <dbReference type="ChEBI" id="CHEBI:30616"/>
    </ligand>
</feature>
<feature type="binding site" evidence="1">
    <location>
        <position position="490"/>
    </location>
    <ligand>
        <name>L-aspartate</name>
        <dbReference type="ChEBI" id="CHEBI:29991"/>
    </ligand>
</feature>
<feature type="binding site" evidence="1">
    <location>
        <begin position="535"/>
        <end position="538"/>
    </location>
    <ligand>
        <name>ATP</name>
        <dbReference type="ChEBI" id="CHEBI:30616"/>
    </ligand>
</feature>
<dbReference type="EC" id="6.1.1.12" evidence="1"/>
<dbReference type="EMBL" id="CP000472">
    <property type="protein sequence ID" value="ACJ29096.1"/>
    <property type="molecule type" value="Genomic_DNA"/>
</dbReference>
<dbReference type="RefSeq" id="WP_020912456.1">
    <property type="nucleotide sequence ID" value="NC_011566.1"/>
</dbReference>
<dbReference type="SMR" id="B8CNX7"/>
<dbReference type="STRING" id="225849.swp_2351"/>
<dbReference type="KEGG" id="swp:swp_2351"/>
<dbReference type="eggNOG" id="COG0173">
    <property type="taxonomic scope" value="Bacteria"/>
</dbReference>
<dbReference type="HOGENOM" id="CLU_014330_3_2_6"/>
<dbReference type="OrthoDB" id="9802326at2"/>
<dbReference type="Proteomes" id="UP000000753">
    <property type="component" value="Chromosome"/>
</dbReference>
<dbReference type="GO" id="GO:0005737">
    <property type="term" value="C:cytoplasm"/>
    <property type="evidence" value="ECO:0007669"/>
    <property type="project" value="UniProtKB-SubCell"/>
</dbReference>
<dbReference type="GO" id="GO:0004815">
    <property type="term" value="F:aspartate-tRNA ligase activity"/>
    <property type="evidence" value="ECO:0007669"/>
    <property type="project" value="UniProtKB-UniRule"/>
</dbReference>
<dbReference type="GO" id="GO:0005524">
    <property type="term" value="F:ATP binding"/>
    <property type="evidence" value="ECO:0007669"/>
    <property type="project" value="UniProtKB-UniRule"/>
</dbReference>
<dbReference type="GO" id="GO:0003676">
    <property type="term" value="F:nucleic acid binding"/>
    <property type="evidence" value="ECO:0007669"/>
    <property type="project" value="InterPro"/>
</dbReference>
<dbReference type="GO" id="GO:0006422">
    <property type="term" value="P:aspartyl-tRNA aminoacylation"/>
    <property type="evidence" value="ECO:0007669"/>
    <property type="project" value="UniProtKB-UniRule"/>
</dbReference>
<dbReference type="CDD" id="cd00777">
    <property type="entry name" value="AspRS_core"/>
    <property type="match status" value="1"/>
</dbReference>
<dbReference type="CDD" id="cd04317">
    <property type="entry name" value="EcAspRS_like_N"/>
    <property type="match status" value="1"/>
</dbReference>
<dbReference type="FunFam" id="2.40.50.140:FF:000080">
    <property type="entry name" value="Aspartate--tRNA ligase"/>
    <property type="match status" value="1"/>
</dbReference>
<dbReference type="Gene3D" id="3.30.930.10">
    <property type="entry name" value="Bira Bifunctional Protein, Domain 2"/>
    <property type="match status" value="1"/>
</dbReference>
<dbReference type="Gene3D" id="3.30.1360.30">
    <property type="entry name" value="GAD-like domain"/>
    <property type="match status" value="1"/>
</dbReference>
<dbReference type="Gene3D" id="2.40.50.140">
    <property type="entry name" value="Nucleic acid-binding proteins"/>
    <property type="match status" value="1"/>
</dbReference>
<dbReference type="HAMAP" id="MF_00044">
    <property type="entry name" value="Asp_tRNA_synth_type1"/>
    <property type="match status" value="1"/>
</dbReference>
<dbReference type="InterPro" id="IPR004364">
    <property type="entry name" value="Aa-tRNA-synt_II"/>
</dbReference>
<dbReference type="InterPro" id="IPR006195">
    <property type="entry name" value="aa-tRNA-synth_II"/>
</dbReference>
<dbReference type="InterPro" id="IPR045864">
    <property type="entry name" value="aa-tRNA-synth_II/BPL/LPL"/>
</dbReference>
<dbReference type="InterPro" id="IPR004524">
    <property type="entry name" value="Asp-tRNA-ligase_1"/>
</dbReference>
<dbReference type="InterPro" id="IPR047089">
    <property type="entry name" value="Asp-tRNA-ligase_1_N"/>
</dbReference>
<dbReference type="InterPro" id="IPR002312">
    <property type="entry name" value="Asp/Asn-tRNA-synth_IIb"/>
</dbReference>
<dbReference type="InterPro" id="IPR047090">
    <property type="entry name" value="AspRS_core"/>
</dbReference>
<dbReference type="InterPro" id="IPR004115">
    <property type="entry name" value="GAD-like_sf"/>
</dbReference>
<dbReference type="InterPro" id="IPR029351">
    <property type="entry name" value="GAD_dom"/>
</dbReference>
<dbReference type="InterPro" id="IPR012340">
    <property type="entry name" value="NA-bd_OB-fold"/>
</dbReference>
<dbReference type="InterPro" id="IPR004365">
    <property type="entry name" value="NA-bd_OB_tRNA"/>
</dbReference>
<dbReference type="NCBIfam" id="TIGR00459">
    <property type="entry name" value="aspS_bact"/>
    <property type="match status" value="1"/>
</dbReference>
<dbReference type="NCBIfam" id="NF001750">
    <property type="entry name" value="PRK00476.1"/>
    <property type="match status" value="1"/>
</dbReference>
<dbReference type="PANTHER" id="PTHR22594:SF5">
    <property type="entry name" value="ASPARTATE--TRNA LIGASE, MITOCHONDRIAL"/>
    <property type="match status" value="1"/>
</dbReference>
<dbReference type="PANTHER" id="PTHR22594">
    <property type="entry name" value="ASPARTYL/LYSYL-TRNA SYNTHETASE"/>
    <property type="match status" value="1"/>
</dbReference>
<dbReference type="Pfam" id="PF02938">
    <property type="entry name" value="GAD"/>
    <property type="match status" value="1"/>
</dbReference>
<dbReference type="Pfam" id="PF00152">
    <property type="entry name" value="tRNA-synt_2"/>
    <property type="match status" value="1"/>
</dbReference>
<dbReference type="Pfam" id="PF01336">
    <property type="entry name" value="tRNA_anti-codon"/>
    <property type="match status" value="1"/>
</dbReference>
<dbReference type="PRINTS" id="PR01042">
    <property type="entry name" value="TRNASYNTHASP"/>
</dbReference>
<dbReference type="SUPFAM" id="SSF55681">
    <property type="entry name" value="Class II aaRS and biotin synthetases"/>
    <property type="match status" value="1"/>
</dbReference>
<dbReference type="SUPFAM" id="SSF55261">
    <property type="entry name" value="GAD domain-like"/>
    <property type="match status" value="1"/>
</dbReference>
<dbReference type="SUPFAM" id="SSF50249">
    <property type="entry name" value="Nucleic acid-binding proteins"/>
    <property type="match status" value="1"/>
</dbReference>
<dbReference type="PROSITE" id="PS50862">
    <property type="entry name" value="AA_TRNA_LIGASE_II"/>
    <property type="match status" value="1"/>
</dbReference>
<evidence type="ECO:0000255" key="1">
    <source>
        <dbReference type="HAMAP-Rule" id="MF_00044"/>
    </source>
</evidence>
<reference key="1">
    <citation type="journal article" date="2008" name="PLoS ONE">
        <title>Environmental adaptation: genomic analysis of the piezotolerant and psychrotolerant deep-sea iron reducing bacterium Shewanella piezotolerans WP3.</title>
        <authorList>
            <person name="Wang F."/>
            <person name="Wang J."/>
            <person name="Jian H."/>
            <person name="Zhang B."/>
            <person name="Li S."/>
            <person name="Wang F."/>
            <person name="Zeng X."/>
            <person name="Gao L."/>
            <person name="Bartlett D.H."/>
            <person name="Yu J."/>
            <person name="Hu S."/>
            <person name="Xiao X."/>
        </authorList>
    </citation>
    <scope>NUCLEOTIDE SEQUENCE [LARGE SCALE GENOMIC DNA]</scope>
    <source>
        <strain>WP3 / JCM 13877</strain>
    </source>
</reference>
<organism>
    <name type="scientific">Shewanella piezotolerans (strain WP3 / JCM 13877)</name>
    <dbReference type="NCBI Taxonomy" id="225849"/>
    <lineage>
        <taxon>Bacteria</taxon>
        <taxon>Pseudomonadati</taxon>
        <taxon>Pseudomonadota</taxon>
        <taxon>Gammaproteobacteria</taxon>
        <taxon>Alteromonadales</taxon>
        <taxon>Shewanellaceae</taxon>
        <taxon>Shewanella</taxon>
    </lineage>
</organism>
<keyword id="KW-0030">Aminoacyl-tRNA synthetase</keyword>
<keyword id="KW-0067">ATP-binding</keyword>
<keyword id="KW-0963">Cytoplasm</keyword>
<keyword id="KW-0436">Ligase</keyword>
<keyword id="KW-0547">Nucleotide-binding</keyword>
<keyword id="KW-0648">Protein biosynthesis</keyword>
<protein>
    <recommendedName>
        <fullName evidence="1">Aspartate--tRNA ligase</fullName>
        <ecNumber evidence="1">6.1.1.12</ecNumber>
    </recommendedName>
    <alternativeName>
        <fullName evidence="1">Aspartyl-tRNA synthetase</fullName>
        <shortName evidence="1">AspRS</shortName>
    </alternativeName>
</protein>
<gene>
    <name evidence="1" type="primary">aspS</name>
    <name type="ordered locus">swp_2351</name>
</gene>
<name>SYD_SHEPW</name>